<gene>
    <name evidence="1" type="primary">coaD</name>
    <name type="ordered locus">ACIAD2893</name>
</gene>
<evidence type="ECO:0000255" key="1">
    <source>
        <dbReference type="HAMAP-Rule" id="MF_00151"/>
    </source>
</evidence>
<dbReference type="EC" id="2.7.7.3" evidence="1"/>
<dbReference type="EMBL" id="CR543861">
    <property type="protein sequence ID" value="CAG69615.1"/>
    <property type="molecule type" value="Genomic_DNA"/>
</dbReference>
<dbReference type="RefSeq" id="WP_004929418.1">
    <property type="nucleotide sequence ID" value="NC_005966.1"/>
</dbReference>
<dbReference type="SMR" id="Q6F8K0"/>
<dbReference type="STRING" id="202950.GCA_001485005_03074"/>
<dbReference type="GeneID" id="45235125"/>
<dbReference type="KEGG" id="aci:ACIAD2893"/>
<dbReference type="eggNOG" id="COG0669">
    <property type="taxonomic scope" value="Bacteria"/>
</dbReference>
<dbReference type="HOGENOM" id="CLU_100149_0_1_6"/>
<dbReference type="OrthoDB" id="9806661at2"/>
<dbReference type="BioCyc" id="ASP62977:ACIAD_RS13050-MONOMER"/>
<dbReference type="UniPathway" id="UPA00241">
    <property type="reaction ID" value="UER00355"/>
</dbReference>
<dbReference type="Proteomes" id="UP000000430">
    <property type="component" value="Chromosome"/>
</dbReference>
<dbReference type="GO" id="GO:0005737">
    <property type="term" value="C:cytoplasm"/>
    <property type="evidence" value="ECO:0007669"/>
    <property type="project" value="UniProtKB-SubCell"/>
</dbReference>
<dbReference type="GO" id="GO:0005524">
    <property type="term" value="F:ATP binding"/>
    <property type="evidence" value="ECO:0007669"/>
    <property type="project" value="UniProtKB-KW"/>
</dbReference>
<dbReference type="GO" id="GO:0004595">
    <property type="term" value="F:pantetheine-phosphate adenylyltransferase activity"/>
    <property type="evidence" value="ECO:0007669"/>
    <property type="project" value="UniProtKB-UniRule"/>
</dbReference>
<dbReference type="GO" id="GO:0015937">
    <property type="term" value="P:coenzyme A biosynthetic process"/>
    <property type="evidence" value="ECO:0007669"/>
    <property type="project" value="UniProtKB-UniRule"/>
</dbReference>
<dbReference type="CDD" id="cd02163">
    <property type="entry name" value="PPAT"/>
    <property type="match status" value="1"/>
</dbReference>
<dbReference type="Gene3D" id="3.40.50.620">
    <property type="entry name" value="HUPs"/>
    <property type="match status" value="1"/>
</dbReference>
<dbReference type="HAMAP" id="MF_00151">
    <property type="entry name" value="PPAT_bact"/>
    <property type="match status" value="1"/>
</dbReference>
<dbReference type="InterPro" id="IPR004821">
    <property type="entry name" value="Cyt_trans-like"/>
</dbReference>
<dbReference type="InterPro" id="IPR001980">
    <property type="entry name" value="PPAT"/>
</dbReference>
<dbReference type="InterPro" id="IPR014729">
    <property type="entry name" value="Rossmann-like_a/b/a_fold"/>
</dbReference>
<dbReference type="NCBIfam" id="TIGR01510">
    <property type="entry name" value="coaD_prev_kdtB"/>
    <property type="match status" value="1"/>
</dbReference>
<dbReference type="NCBIfam" id="TIGR00125">
    <property type="entry name" value="cyt_tran_rel"/>
    <property type="match status" value="1"/>
</dbReference>
<dbReference type="PANTHER" id="PTHR21342">
    <property type="entry name" value="PHOSPHOPANTETHEINE ADENYLYLTRANSFERASE"/>
    <property type="match status" value="1"/>
</dbReference>
<dbReference type="PANTHER" id="PTHR21342:SF1">
    <property type="entry name" value="PHOSPHOPANTETHEINE ADENYLYLTRANSFERASE"/>
    <property type="match status" value="1"/>
</dbReference>
<dbReference type="Pfam" id="PF01467">
    <property type="entry name" value="CTP_transf_like"/>
    <property type="match status" value="1"/>
</dbReference>
<dbReference type="PRINTS" id="PR01020">
    <property type="entry name" value="LPSBIOSNTHSS"/>
</dbReference>
<dbReference type="SUPFAM" id="SSF52374">
    <property type="entry name" value="Nucleotidylyl transferase"/>
    <property type="match status" value="1"/>
</dbReference>
<feature type="chain" id="PRO_0000156157" description="Phosphopantetheine adenylyltransferase">
    <location>
        <begin position="1"/>
        <end position="163"/>
    </location>
</feature>
<feature type="binding site" evidence="1">
    <location>
        <begin position="11"/>
        <end position="12"/>
    </location>
    <ligand>
        <name>ATP</name>
        <dbReference type="ChEBI" id="CHEBI:30616"/>
    </ligand>
</feature>
<feature type="binding site" evidence="1">
    <location>
        <position position="11"/>
    </location>
    <ligand>
        <name>substrate</name>
    </ligand>
</feature>
<feature type="binding site" evidence="1">
    <location>
        <position position="19"/>
    </location>
    <ligand>
        <name>ATP</name>
        <dbReference type="ChEBI" id="CHEBI:30616"/>
    </ligand>
</feature>
<feature type="binding site" evidence="1">
    <location>
        <position position="43"/>
    </location>
    <ligand>
        <name>substrate</name>
    </ligand>
</feature>
<feature type="binding site" evidence="1">
    <location>
        <position position="75"/>
    </location>
    <ligand>
        <name>substrate</name>
    </ligand>
</feature>
<feature type="binding site" evidence="1">
    <location>
        <position position="89"/>
    </location>
    <ligand>
        <name>substrate</name>
    </ligand>
</feature>
<feature type="binding site" evidence="1">
    <location>
        <begin position="90"/>
        <end position="92"/>
    </location>
    <ligand>
        <name>ATP</name>
        <dbReference type="ChEBI" id="CHEBI:30616"/>
    </ligand>
</feature>
<feature type="binding site" evidence="1">
    <location>
        <position position="100"/>
    </location>
    <ligand>
        <name>ATP</name>
        <dbReference type="ChEBI" id="CHEBI:30616"/>
    </ligand>
</feature>
<feature type="binding site" evidence="1">
    <location>
        <begin position="125"/>
        <end position="131"/>
    </location>
    <ligand>
        <name>ATP</name>
        <dbReference type="ChEBI" id="CHEBI:30616"/>
    </ligand>
</feature>
<feature type="site" description="Transition state stabilizer" evidence="1">
    <location>
        <position position="19"/>
    </location>
</feature>
<accession>Q6F8K0</accession>
<sequence>MSKTRVIYPGTFDPITNGHVDLVTRASRMFDEVVVAIAIGHHKKPLFSLEERVKLAQLSLSHLHNVEFVGFDGLLVNFFREQNATAVLRGLRAVSDFEYEFQLANMNRQLDHHFEAVFLTPSEQYSFISSTLVREIARLRGDVAKFVPQAVVEAFEYKHQQGW</sequence>
<proteinExistence type="inferred from homology"/>
<name>COAD_ACIAD</name>
<organism>
    <name type="scientific">Acinetobacter baylyi (strain ATCC 33305 / BD413 / ADP1)</name>
    <dbReference type="NCBI Taxonomy" id="62977"/>
    <lineage>
        <taxon>Bacteria</taxon>
        <taxon>Pseudomonadati</taxon>
        <taxon>Pseudomonadota</taxon>
        <taxon>Gammaproteobacteria</taxon>
        <taxon>Moraxellales</taxon>
        <taxon>Moraxellaceae</taxon>
        <taxon>Acinetobacter</taxon>
    </lineage>
</organism>
<comment type="function">
    <text evidence="1">Reversibly transfers an adenylyl group from ATP to 4'-phosphopantetheine, yielding dephospho-CoA (dPCoA) and pyrophosphate.</text>
</comment>
<comment type="catalytic activity">
    <reaction evidence="1">
        <text>(R)-4'-phosphopantetheine + ATP + H(+) = 3'-dephospho-CoA + diphosphate</text>
        <dbReference type="Rhea" id="RHEA:19801"/>
        <dbReference type="ChEBI" id="CHEBI:15378"/>
        <dbReference type="ChEBI" id="CHEBI:30616"/>
        <dbReference type="ChEBI" id="CHEBI:33019"/>
        <dbReference type="ChEBI" id="CHEBI:57328"/>
        <dbReference type="ChEBI" id="CHEBI:61723"/>
        <dbReference type="EC" id="2.7.7.3"/>
    </reaction>
</comment>
<comment type="cofactor">
    <cofactor evidence="1">
        <name>Mg(2+)</name>
        <dbReference type="ChEBI" id="CHEBI:18420"/>
    </cofactor>
</comment>
<comment type="pathway">
    <text evidence="1">Cofactor biosynthesis; coenzyme A biosynthesis; CoA from (R)-pantothenate: step 4/5.</text>
</comment>
<comment type="subunit">
    <text evidence="1">Homohexamer.</text>
</comment>
<comment type="subcellular location">
    <subcellularLocation>
        <location evidence="1">Cytoplasm</location>
    </subcellularLocation>
</comment>
<comment type="similarity">
    <text evidence="1">Belongs to the bacterial CoaD family.</text>
</comment>
<keyword id="KW-0067">ATP-binding</keyword>
<keyword id="KW-0173">Coenzyme A biosynthesis</keyword>
<keyword id="KW-0963">Cytoplasm</keyword>
<keyword id="KW-0460">Magnesium</keyword>
<keyword id="KW-0547">Nucleotide-binding</keyword>
<keyword id="KW-0548">Nucleotidyltransferase</keyword>
<keyword id="KW-0808">Transferase</keyword>
<reference key="1">
    <citation type="journal article" date="2004" name="Nucleic Acids Res.">
        <title>Unique features revealed by the genome sequence of Acinetobacter sp. ADP1, a versatile and naturally transformation competent bacterium.</title>
        <authorList>
            <person name="Barbe V."/>
            <person name="Vallenet D."/>
            <person name="Fonknechten N."/>
            <person name="Kreimeyer A."/>
            <person name="Oztas S."/>
            <person name="Labarre L."/>
            <person name="Cruveiller S."/>
            <person name="Robert C."/>
            <person name="Duprat S."/>
            <person name="Wincker P."/>
            <person name="Ornston L.N."/>
            <person name="Weissenbach J."/>
            <person name="Marliere P."/>
            <person name="Cohen G.N."/>
            <person name="Medigue C."/>
        </authorList>
    </citation>
    <scope>NUCLEOTIDE SEQUENCE [LARGE SCALE GENOMIC DNA]</scope>
    <source>
        <strain>ATCC 33305 / BD413 / ADP1</strain>
    </source>
</reference>
<protein>
    <recommendedName>
        <fullName evidence="1">Phosphopantetheine adenylyltransferase</fullName>
        <ecNumber evidence="1">2.7.7.3</ecNumber>
    </recommendedName>
    <alternativeName>
        <fullName evidence="1">Dephospho-CoA pyrophosphorylase</fullName>
    </alternativeName>
    <alternativeName>
        <fullName evidence="1">Pantetheine-phosphate adenylyltransferase</fullName>
        <shortName evidence="1">PPAT</shortName>
    </alternativeName>
</protein>